<proteinExistence type="inferred from homology"/>
<comment type="cofactor">
    <cofactor evidence="1">
        <name>Zn(2+)</name>
        <dbReference type="ChEBI" id="CHEBI:29105"/>
    </cofactor>
    <text evidence="1">Binds 3 Zn(2+) ions per subunit.</text>
</comment>
<comment type="subunit">
    <text evidence="1">Homotrimer.</text>
</comment>
<comment type="similarity">
    <text evidence="1">Belongs to the PHP family.</text>
</comment>
<sequence length="245" mass="26832">MYPVDLHMHTVASTHAYSTLSDYIAQAKQKGIKLFAITDHGPDMEDAPHHWHFINMRIWPRVVDGVGILRGIEANIKNVDGEIDCSGKMFDSLDLIIAGFHEPVFAPHDKATNTQAMIATIASGNVHIISHPGNPKYEIDVKAVAEAAAKHQVALEINNSSFLHSRKGSEDNCRAVAAAVRDAGGWVALGSDSHTAFTMGEFEECLKILDAVDFPPERILNVSPRRLLNFLESRGMAPIAEFADL</sequence>
<reference key="1">
    <citation type="journal article" date="2011" name="Proc. Natl. Acad. Sci. U.S.A.">
        <title>Genomic anatomy of Escherichia coli O157:H7 outbreaks.</title>
        <authorList>
            <person name="Eppinger M."/>
            <person name="Mammel M.K."/>
            <person name="Leclerc J.E."/>
            <person name="Ravel J."/>
            <person name="Cebula T.A."/>
        </authorList>
    </citation>
    <scope>NUCLEOTIDE SEQUENCE [LARGE SCALE GENOMIC DNA]</scope>
    <source>
        <strain>EC4115 / EHEC</strain>
    </source>
</reference>
<dbReference type="EC" id="3.1.3.-" evidence="1"/>
<dbReference type="EMBL" id="CP001164">
    <property type="protein sequence ID" value="ACI38030.1"/>
    <property type="molecule type" value="Genomic_DNA"/>
</dbReference>
<dbReference type="RefSeq" id="WP_000283664.1">
    <property type="nucleotide sequence ID" value="NC_011353.1"/>
</dbReference>
<dbReference type="SMR" id="B5YVQ4"/>
<dbReference type="GeneID" id="93776384"/>
<dbReference type="KEGG" id="ecf:ECH74115_1412"/>
<dbReference type="HOGENOM" id="CLU_061999_0_1_6"/>
<dbReference type="GO" id="GO:0005829">
    <property type="term" value="C:cytosol"/>
    <property type="evidence" value="ECO:0007669"/>
    <property type="project" value="TreeGrafter"/>
</dbReference>
<dbReference type="GO" id="GO:0016791">
    <property type="term" value="F:phosphatase activity"/>
    <property type="evidence" value="ECO:0007669"/>
    <property type="project" value="UniProtKB-UniRule"/>
</dbReference>
<dbReference type="GO" id="GO:0008270">
    <property type="term" value="F:zinc ion binding"/>
    <property type="evidence" value="ECO:0007669"/>
    <property type="project" value="UniProtKB-UniRule"/>
</dbReference>
<dbReference type="GO" id="GO:0071978">
    <property type="term" value="P:bacterial-type flagellum-dependent swarming motility"/>
    <property type="evidence" value="ECO:0007669"/>
    <property type="project" value="TreeGrafter"/>
</dbReference>
<dbReference type="CDD" id="cd07437">
    <property type="entry name" value="PHP_HisPPase_Ycdx_like"/>
    <property type="match status" value="1"/>
</dbReference>
<dbReference type="FunFam" id="3.20.20.140:FF:000008">
    <property type="entry name" value="Probable phosphatase YcdX"/>
    <property type="match status" value="1"/>
</dbReference>
<dbReference type="Gene3D" id="3.20.20.140">
    <property type="entry name" value="Metal-dependent hydrolases"/>
    <property type="match status" value="1"/>
</dbReference>
<dbReference type="HAMAP" id="MF_01561">
    <property type="entry name" value="YcdX_phosphat"/>
    <property type="match status" value="1"/>
</dbReference>
<dbReference type="InterPro" id="IPR023710">
    <property type="entry name" value="Phosphatase_YcdX_put"/>
</dbReference>
<dbReference type="InterPro" id="IPR004013">
    <property type="entry name" value="PHP_dom"/>
</dbReference>
<dbReference type="InterPro" id="IPR050243">
    <property type="entry name" value="PHP_phosphatase"/>
</dbReference>
<dbReference type="InterPro" id="IPR003141">
    <property type="entry name" value="Pol/His_phosphatase_N"/>
</dbReference>
<dbReference type="InterPro" id="IPR016195">
    <property type="entry name" value="Pol/histidinol_Pase-like"/>
</dbReference>
<dbReference type="NCBIfam" id="NF006702">
    <property type="entry name" value="PRK09248.1"/>
    <property type="match status" value="1"/>
</dbReference>
<dbReference type="PANTHER" id="PTHR36928">
    <property type="entry name" value="PHOSPHATASE YCDX-RELATED"/>
    <property type="match status" value="1"/>
</dbReference>
<dbReference type="PANTHER" id="PTHR36928:SF1">
    <property type="entry name" value="PHOSPHATASE YCDX-RELATED"/>
    <property type="match status" value="1"/>
</dbReference>
<dbReference type="Pfam" id="PF02811">
    <property type="entry name" value="PHP"/>
    <property type="match status" value="1"/>
</dbReference>
<dbReference type="SMART" id="SM00481">
    <property type="entry name" value="POLIIIAc"/>
    <property type="match status" value="1"/>
</dbReference>
<dbReference type="SUPFAM" id="SSF89550">
    <property type="entry name" value="PHP domain-like"/>
    <property type="match status" value="1"/>
</dbReference>
<evidence type="ECO:0000255" key="1">
    <source>
        <dbReference type="HAMAP-Rule" id="MF_01561"/>
    </source>
</evidence>
<feature type="chain" id="PRO_1000147130" description="Probable phosphatase YcdX">
    <location>
        <begin position="1"/>
        <end position="245"/>
    </location>
</feature>
<feature type="binding site" evidence="1">
    <location>
        <position position="7"/>
    </location>
    <ligand>
        <name>Zn(2+)</name>
        <dbReference type="ChEBI" id="CHEBI:29105"/>
        <label>1</label>
    </ligand>
</feature>
<feature type="binding site" evidence="1">
    <location>
        <position position="9"/>
    </location>
    <ligand>
        <name>Zn(2+)</name>
        <dbReference type="ChEBI" id="CHEBI:29105"/>
        <label>1</label>
    </ligand>
</feature>
<feature type="binding site" evidence="1">
    <location>
        <position position="15"/>
    </location>
    <ligand>
        <name>Zn(2+)</name>
        <dbReference type="ChEBI" id="CHEBI:29105"/>
        <label>2</label>
    </ligand>
</feature>
<feature type="binding site" evidence="1">
    <location>
        <position position="40"/>
    </location>
    <ligand>
        <name>Zn(2+)</name>
        <dbReference type="ChEBI" id="CHEBI:29105"/>
        <label>2</label>
    </ligand>
</feature>
<feature type="binding site" evidence="1">
    <location>
        <position position="73"/>
    </location>
    <ligand>
        <name>Zn(2+)</name>
        <dbReference type="ChEBI" id="CHEBI:29105"/>
        <label>1</label>
    </ligand>
</feature>
<feature type="binding site" evidence="1">
    <location>
        <position position="73"/>
    </location>
    <ligand>
        <name>Zn(2+)</name>
        <dbReference type="ChEBI" id="CHEBI:29105"/>
        <label>3</label>
    </ligand>
</feature>
<feature type="binding site" evidence="1">
    <location>
        <position position="101"/>
    </location>
    <ligand>
        <name>Zn(2+)</name>
        <dbReference type="ChEBI" id="CHEBI:29105"/>
        <label>3</label>
    </ligand>
</feature>
<feature type="binding site" evidence="1">
    <location>
        <position position="131"/>
    </location>
    <ligand>
        <name>Zn(2+)</name>
        <dbReference type="ChEBI" id="CHEBI:29105"/>
        <label>3</label>
    </ligand>
</feature>
<feature type="binding site" evidence="1">
    <location>
        <position position="192"/>
    </location>
    <ligand>
        <name>Zn(2+)</name>
        <dbReference type="ChEBI" id="CHEBI:29105"/>
        <label>1</label>
    </ligand>
</feature>
<feature type="binding site" evidence="1">
    <location>
        <position position="194"/>
    </location>
    <ligand>
        <name>Zn(2+)</name>
        <dbReference type="ChEBI" id="CHEBI:29105"/>
        <label>2</label>
    </ligand>
</feature>
<protein>
    <recommendedName>
        <fullName evidence="1">Probable phosphatase YcdX</fullName>
        <ecNumber evidence="1">3.1.3.-</ecNumber>
    </recommendedName>
</protein>
<organism>
    <name type="scientific">Escherichia coli O157:H7 (strain EC4115 / EHEC)</name>
    <dbReference type="NCBI Taxonomy" id="444450"/>
    <lineage>
        <taxon>Bacteria</taxon>
        <taxon>Pseudomonadati</taxon>
        <taxon>Pseudomonadota</taxon>
        <taxon>Gammaproteobacteria</taxon>
        <taxon>Enterobacterales</taxon>
        <taxon>Enterobacteriaceae</taxon>
        <taxon>Escherichia</taxon>
    </lineage>
</organism>
<gene>
    <name evidence="1" type="primary">ycdX</name>
    <name type="ordered locus">ECH74115_1412</name>
</gene>
<accession>B5YVQ4</accession>
<name>YCDX_ECO5E</name>
<keyword id="KW-0378">Hydrolase</keyword>
<keyword id="KW-0479">Metal-binding</keyword>
<keyword id="KW-0862">Zinc</keyword>